<reference key="1">
    <citation type="journal article" date="2002" name="Nature">
        <title>Sequence and analysis of chromosome 2 of Dictyostelium discoideum.</title>
        <authorList>
            <person name="Gloeckner G."/>
            <person name="Eichinger L."/>
            <person name="Szafranski K."/>
            <person name="Pachebat J.A."/>
            <person name="Bankier A.T."/>
            <person name="Dear P.H."/>
            <person name="Lehmann R."/>
            <person name="Baumgart C."/>
            <person name="Parra G."/>
            <person name="Abril J.F."/>
            <person name="Guigo R."/>
            <person name="Kumpf K."/>
            <person name="Tunggal B."/>
            <person name="Cox E.C."/>
            <person name="Quail M.A."/>
            <person name="Platzer M."/>
            <person name="Rosenthal A."/>
            <person name="Noegel A.A."/>
        </authorList>
    </citation>
    <scope>NUCLEOTIDE SEQUENCE [LARGE SCALE GENOMIC DNA]</scope>
    <source>
        <strain>AX4</strain>
    </source>
</reference>
<reference key="2">
    <citation type="journal article" date="2005" name="Nature">
        <title>The genome of the social amoeba Dictyostelium discoideum.</title>
        <authorList>
            <person name="Eichinger L."/>
            <person name="Pachebat J.A."/>
            <person name="Gloeckner G."/>
            <person name="Rajandream M.A."/>
            <person name="Sucgang R."/>
            <person name="Berriman M."/>
            <person name="Song J."/>
            <person name="Olsen R."/>
            <person name="Szafranski K."/>
            <person name="Xu Q."/>
            <person name="Tunggal B."/>
            <person name="Kummerfeld S."/>
            <person name="Madera M."/>
            <person name="Konfortov B.A."/>
            <person name="Rivero F."/>
            <person name="Bankier A.T."/>
            <person name="Lehmann R."/>
            <person name="Hamlin N."/>
            <person name="Davies R."/>
            <person name="Gaudet P."/>
            <person name="Fey P."/>
            <person name="Pilcher K."/>
            <person name="Chen G."/>
            <person name="Saunders D."/>
            <person name="Sodergren E.J."/>
            <person name="Davis P."/>
            <person name="Kerhornou A."/>
            <person name="Nie X."/>
            <person name="Hall N."/>
            <person name="Anjard C."/>
            <person name="Hemphill L."/>
            <person name="Bason N."/>
            <person name="Farbrother P."/>
            <person name="Desany B."/>
            <person name="Just E."/>
            <person name="Morio T."/>
            <person name="Rost R."/>
            <person name="Churcher C.M."/>
            <person name="Cooper J."/>
            <person name="Haydock S."/>
            <person name="van Driessche N."/>
            <person name="Cronin A."/>
            <person name="Goodhead I."/>
            <person name="Muzny D.M."/>
            <person name="Mourier T."/>
            <person name="Pain A."/>
            <person name="Lu M."/>
            <person name="Harper D."/>
            <person name="Lindsay R."/>
            <person name="Hauser H."/>
            <person name="James K.D."/>
            <person name="Quiles M."/>
            <person name="Madan Babu M."/>
            <person name="Saito T."/>
            <person name="Buchrieser C."/>
            <person name="Wardroper A."/>
            <person name="Felder M."/>
            <person name="Thangavelu M."/>
            <person name="Johnson D."/>
            <person name="Knights A."/>
            <person name="Loulseged H."/>
            <person name="Mungall K.L."/>
            <person name="Oliver K."/>
            <person name="Price C."/>
            <person name="Quail M.A."/>
            <person name="Urushihara H."/>
            <person name="Hernandez J."/>
            <person name="Rabbinowitsch E."/>
            <person name="Steffen D."/>
            <person name="Sanders M."/>
            <person name="Ma J."/>
            <person name="Kohara Y."/>
            <person name="Sharp S."/>
            <person name="Simmonds M.N."/>
            <person name="Spiegler S."/>
            <person name="Tivey A."/>
            <person name="Sugano S."/>
            <person name="White B."/>
            <person name="Walker D."/>
            <person name="Woodward J.R."/>
            <person name="Winckler T."/>
            <person name="Tanaka Y."/>
            <person name="Shaulsky G."/>
            <person name="Schleicher M."/>
            <person name="Weinstock G.M."/>
            <person name="Rosenthal A."/>
            <person name="Cox E.C."/>
            <person name="Chisholm R.L."/>
            <person name="Gibbs R.A."/>
            <person name="Loomis W.F."/>
            <person name="Platzer M."/>
            <person name="Kay R.R."/>
            <person name="Williams J.G."/>
            <person name="Dear P.H."/>
            <person name="Noegel A.A."/>
            <person name="Barrell B.G."/>
            <person name="Kuspa A."/>
        </authorList>
    </citation>
    <scope>NUCLEOTIDE SEQUENCE [LARGE SCALE GENOMIC DNA]</scope>
    <source>
        <strain>AX4</strain>
    </source>
</reference>
<sequence length="1377" mass="154713">MNFRYQPNQQPYQPPQHNNNSNNRGIPTNYQQYPPQNYQQYPPQQYYQAPINPQQFYPGPPQQPNFVSQQTGPIPQQPPGFNNQSPIPQQQPQQPQQPQPSQPSPIPQQPLSPQSSSPSSPQHVVIQPNQPNQQQQNANRKQSALKPSVQHNTIPNIPRTHSAPPSLEEQQQQHQHQNNIKGFTPEKRTPIQHSPQYVIPPQQFGKPIYPNPQQMYFQQQPPYPYYGQPPVVPVVNQMIPQTTVKKTLEIIDPKTNEKVIITSPPKSSTNSTVLPTSNTSSSSSSPTNANGSSTPSGSGYVTSFSSGNVNLRKNKQSGETTPIKQDAASTTTSTPATPSSKAESTTEAETTSKPSTPTTVDSVSSTTTPDKSNVVTAAATTTAAATTTTTTTDTTTTTTTPEAETSTTTPATEVQSPVETTKEEQPKEEVKPTEVQPPVEPTKEEPIKEEPTNEEPTKEEPAKVEPIKEEPSVVESTTTDTKEEPIIVAEEKKQEETPVTPVTEKKEEPIVKPETPVTDSTAASTTVEKESTDSTTTATVSTTAAATTTNGKVEEELEEWEKKGEEDFNIVQSSDSSTSITPATSLVFRNSGEKIVYSKELMMSLKPKSMEEPTGPLKDLKNQIETNTNQNQLNRSGNKIGGNQQNKNMGMGGMNMNPNYPPQMNMKYPPQMNMKYPPKNYNNQVQGQQQQQQGNPNFNKYAPGYQYQQQIQQGMPPPTLQPNPYQPQQATYGITFSRDPVQPSISSQPVNEKRWVPTKVNALDDSQKVLRKANFILNKITPEKFDVLTEELLELGIVDDEKVHKGTIDLIFDKALNESKFCTMYTNLCKKIFEFEKVKKEIAKRAVFEKIGVIETENYHKMSNKQRDEFDQEHNVKAVFRTLLLSTCQKEYEKIPFETVDKVPEDLKPEEKTDFEEGQFKERKRIFGLIKFIGELFKQQMLSEKIVHGIMVSLIGELQRPSEIKLECFCKLLSIVGKTLSQNEQASKYLTSYFQRMQQLVDNSQTLSQRIRFLIQNVMDLKNSNWTLKVDESAKTLKEVEATQNKQEDNRKSNPTGVKNTSNVKNMFNASFNFGGPNVKPMMAPPMNYNKNAPGIKPPAQFQPKPYPYNNNYNNQQQQQQHFGGGNNMMNNNNNNYNRGPMGNMNNNMNNNMNNNNMNNMNSNNSTSNNSANSEIQKKWDAVSTSITDSINEFLELKDEEEFMECVKSYVPSTDLYPHVISQLISTACSKQKDEPLIKKLIFASVFDKKLFTTAQFKSGYELFISSLPDLFEDRPSAFKSVASVFYSFVLNQEGLITITQFANAFTKVLDDCGSSIPKILFEFILQFEDPKKAAQLFVDNKVGVQGFFTEKDFSKITQTAISYNKDLQPFFDIVKL</sequence>
<protein>
    <recommendedName>
        <fullName>Eukaryotic translation initiation factor 4 gamma</fullName>
        <shortName>eIF-4-gamma</shortName>
    </recommendedName>
</protein>
<gene>
    <name type="primary">eif4g</name>
    <name type="ORF">DDB_G0275395</name>
</gene>
<organism>
    <name type="scientific">Dictyostelium discoideum</name>
    <name type="common">Social amoeba</name>
    <dbReference type="NCBI Taxonomy" id="44689"/>
    <lineage>
        <taxon>Eukaryota</taxon>
        <taxon>Amoebozoa</taxon>
        <taxon>Evosea</taxon>
        <taxon>Eumycetozoa</taxon>
        <taxon>Dictyostelia</taxon>
        <taxon>Dictyosteliales</taxon>
        <taxon>Dictyosteliaceae</taxon>
        <taxon>Dictyostelium</taxon>
    </lineage>
</organism>
<evidence type="ECO:0000250" key="1"/>
<evidence type="ECO:0000255" key="2">
    <source>
        <dbReference type="PROSITE-ProRule" id="PRU00698"/>
    </source>
</evidence>
<evidence type="ECO:0000256" key="3">
    <source>
        <dbReference type="SAM" id="MobiDB-lite"/>
    </source>
</evidence>
<evidence type="ECO:0000305" key="4"/>
<comment type="function">
    <text evidence="1">Probable component of the protein complex eIF4F, which is involved in the recognition of the mRNA cap, ATP-dependent unwinding of 5'-terminal secondary structure and recruitment of mRNA to the ribosome.</text>
</comment>
<comment type="similarity">
    <text evidence="4">Belongs to the eukaryotic initiation factor 4G family.</text>
</comment>
<feature type="chain" id="PRO_0000333880" description="Eukaryotic translation initiation factor 4 gamma">
    <location>
        <begin position="1"/>
        <end position="1377"/>
    </location>
</feature>
<feature type="domain" description="MI" evidence="2">
    <location>
        <begin position="1182"/>
        <end position="1305"/>
    </location>
</feature>
<feature type="region of interest" description="Disordered" evidence="3">
    <location>
        <begin position="1"/>
        <end position="189"/>
    </location>
</feature>
<feature type="region of interest" description="Disordered" evidence="3">
    <location>
        <begin position="259"/>
        <end position="563"/>
    </location>
</feature>
<feature type="region of interest" description="Disordered" evidence="3">
    <location>
        <begin position="683"/>
        <end position="702"/>
    </location>
</feature>
<feature type="region of interest" description="Disordered" evidence="3">
    <location>
        <begin position="1041"/>
        <end position="1063"/>
    </location>
</feature>
<feature type="compositionally biased region" description="Low complexity" evidence="3">
    <location>
        <begin position="1"/>
        <end position="57"/>
    </location>
</feature>
<feature type="compositionally biased region" description="Low complexity" evidence="3">
    <location>
        <begin position="84"/>
        <end position="94"/>
    </location>
</feature>
<feature type="compositionally biased region" description="Pro residues" evidence="3">
    <location>
        <begin position="95"/>
        <end position="110"/>
    </location>
</feature>
<feature type="compositionally biased region" description="Low complexity" evidence="3">
    <location>
        <begin position="111"/>
        <end position="137"/>
    </location>
</feature>
<feature type="compositionally biased region" description="Low complexity" evidence="3">
    <location>
        <begin position="168"/>
        <end position="179"/>
    </location>
</feature>
<feature type="compositionally biased region" description="Low complexity" evidence="3">
    <location>
        <begin position="267"/>
        <end position="296"/>
    </location>
</feature>
<feature type="compositionally biased region" description="Polar residues" evidence="3">
    <location>
        <begin position="297"/>
        <end position="323"/>
    </location>
</feature>
<feature type="compositionally biased region" description="Low complexity" evidence="3">
    <location>
        <begin position="326"/>
        <end position="412"/>
    </location>
</feature>
<feature type="compositionally biased region" description="Basic and acidic residues" evidence="3">
    <location>
        <begin position="420"/>
        <end position="432"/>
    </location>
</feature>
<feature type="compositionally biased region" description="Basic and acidic residues" evidence="3">
    <location>
        <begin position="441"/>
        <end position="471"/>
    </location>
</feature>
<feature type="compositionally biased region" description="Basic and acidic residues" evidence="3">
    <location>
        <begin position="480"/>
        <end position="496"/>
    </location>
</feature>
<feature type="compositionally biased region" description="Polar residues" evidence="3">
    <location>
        <begin position="517"/>
        <end position="526"/>
    </location>
</feature>
<feature type="compositionally biased region" description="Low complexity" evidence="3">
    <location>
        <begin position="533"/>
        <end position="549"/>
    </location>
</feature>
<feature type="compositionally biased region" description="Basic and acidic residues" evidence="3">
    <location>
        <begin position="1041"/>
        <end position="1052"/>
    </location>
</feature>
<feature type="compositionally biased region" description="Polar residues" evidence="3">
    <location>
        <begin position="1053"/>
        <end position="1063"/>
    </location>
</feature>
<name>IF4G_DICDI</name>
<keyword id="KW-0396">Initiation factor</keyword>
<keyword id="KW-0648">Protein biosynthesis</keyword>
<keyword id="KW-1185">Reference proteome</keyword>
<proteinExistence type="inferred from homology"/>
<dbReference type="EMBL" id="AAFI02000013">
    <property type="protein sequence ID" value="EAL69763.1"/>
    <property type="molecule type" value="Genomic_DNA"/>
</dbReference>
<dbReference type="RefSeq" id="XP_643657.1">
    <property type="nucleotide sequence ID" value="XM_638565.1"/>
</dbReference>
<dbReference type="SMR" id="Q553R3"/>
<dbReference type="FunCoup" id="Q553R3">
    <property type="interactions" value="98"/>
</dbReference>
<dbReference type="STRING" id="44689.Q553R3"/>
<dbReference type="GlyGen" id="Q553R3">
    <property type="glycosylation" value="2 sites"/>
</dbReference>
<dbReference type="PaxDb" id="44689-DDB0234257"/>
<dbReference type="EnsemblProtists" id="EAL69763">
    <property type="protein sequence ID" value="EAL69763"/>
    <property type="gene ID" value="DDB_G0275395"/>
</dbReference>
<dbReference type="GeneID" id="8619923"/>
<dbReference type="KEGG" id="ddi:DDB_G0275395"/>
<dbReference type="dictyBase" id="DDB_G0275395">
    <property type="gene designation" value="eIF4g"/>
</dbReference>
<dbReference type="VEuPathDB" id="AmoebaDB:DDB_G0275395"/>
<dbReference type="eggNOG" id="KOG0401">
    <property type="taxonomic scope" value="Eukaryota"/>
</dbReference>
<dbReference type="HOGENOM" id="CLU_255900_0_0_1"/>
<dbReference type="InParanoid" id="Q553R3"/>
<dbReference type="OMA" id="DSKWPSM"/>
<dbReference type="Reactome" id="R-DDI-1169408">
    <property type="pathway name" value="ISG15 antiviral mechanism"/>
</dbReference>
<dbReference type="Reactome" id="R-DDI-156827">
    <property type="pathway name" value="L13a-mediated translational silencing of Ceruloplasmin expression"/>
</dbReference>
<dbReference type="Reactome" id="R-DDI-166208">
    <property type="pathway name" value="mTORC1-mediated signalling"/>
</dbReference>
<dbReference type="Reactome" id="R-DDI-450408">
    <property type="pathway name" value="AUF1 (hnRNP D0) binds and destabilizes mRNA"/>
</dbReference>
<dbReference type="Reactome" id="R-DDI-72662">
    <property type="pathway name" value="Activation of the mRNA upon binding of the cap-binding complex and eIFs, and subsequent binding to 43S"/>
</dbReference>
<dbReference type="Reactome" id="R-DDI-72702">
    <property type="pathway name" value="Ribosomal scanning and start codon recognition"/>
</dbReference>
<dbReference type="Reactome" id="R-DDI-975956">
    <property type="pathway name" value="Nonsense Mediated Decay (NMD) independent of the Exon Junction Complex (EJC)"/>
</dbReference>
<dbReference type="Reactome" id="R-DDI-975957">
    <property type="pathway name" value="Nonsense Mediated Decay (NMD) enhanced by the Exon Junction Complex (EJC)"/>
</dbReference>
<dbReference type="PRO" id="PR:Q553R3"/>
<dbReference type="Proteomes" id="UP000002195">
    <property type="component" value="Chromosome 2"/>
</dbReference>
<dbReference type="GO" id="GO:0005737">
    <property type="term" value="C:cytoplasm"/>
    <property type="evidence" value="ECO:0000250"/>
    <property type="project" value="dictyBase"/>
</dbReference>
<dbReference type="GO" id="GO:0016281">
    <property type="term" value="C:eukaryotic translation initiation factor 4F complex"/>
    <property type="evidence" value="ECO:0000250"/>
    <property type="project" value="dictyBase"/>
</dbReference>
<dbReference type="GO" id="GO:0003729">
    <property type="term" value="F:mRNA binding"/>
    <property type="evidence" value="ECO:0000318"/>
    <property type="project" value="GO_Central"/>
</dbReference>
<dbReference type="GO" id="GO:0003743">
    <property type="term" value="F:translation initiation factor activity"/>
    <property type="evidence" value="ECO:0000250"/>
    <property type="project" value="dictyBase"/>
</dbReference>
<dbReference type="GO" id="GO:0006446">
    <property type="term" value="P:regulation of translational initiation"/>
    <property type="evidence" value="ECO:0000250"/>
    <property type="project" value="dictyBase"/>
</dbReference>
<dbReference type="GO" id="GO:0006413">
    <property type="term" value="P:translational initiation"/>
    <property type="evidence" value="ECO:0000318"/>
    <property type="project" value="GO_Central"/>
</dbReference>
<dbReference type="FunFam" id="1.25.40.180:FF:000197">
    <property type="match status" value="1"/>
</dbReference>
<dbReference type="FunFam" id="1.25.40.180:FF:000130">
    <property type="entry name" value="Eukaryotic translation initiation factor"/>
    <property type="match status" value="1"/>
</dbReference>
<dbReference type="Gene3D" id="1.25.40.180">
    <property type="match status" value="2"/>
</dbReference>
<dbReference type="InterPro" id="IPR016024">
    <property type="entry name" value="ARM-type_fold"/>
</dbReference>
<dbReference type="InterPro" id="IPR003891">
    <property type="entry name" value="Initiation_fac_eIF4g_MI"/>
</dbReference>
<dbReference type="InterPro" id="IPR003890">
    <property type="entry name" value="MIF4G-like_typ-3"/>
</dbReference>
<dbReference type="PANTHER" id="PTHR23253">
    <property type="entry name" value="EUKARYOTIC TRANSLATION INITIATION FACTOR 4 GAMMA"/>
    <property type="match status" value="1"/>
</dbReference>
<dbReference type="PANTHER" id="PTHR23253:SF9">
    <property type="entry name" value="EUKARYOTIC TRANSLATION INITIATION FACTOR 4 GAMMA 2"/>
    <property type="match status" value="1"/>
</dbReference>
<dbReference type="Pfam" id="PF02847">
    <property type="entry name" value="MA3"/>
    <property type="match status" value="1"/>
</dbReference>
<dbReference type="Pfam" id="PF02854">
    <property type="entry name" value="MIF4G"/>
    <property type="match status" value="1"/>
</dbReference>
<dbReference type="SMART" id="SM00543">
    <property type="entry name" value="MIF4G"/>
    <property type="match status" value="1"/>
</dbReference>
<dbReference type="SUPFAM" id="SSF48371">
    <property type="entry name" value="ARM repeat"/>
    <property type="match status" value="2"/>
</dbReference>
<dbReference type="PROSITE" id="PS51366">
    <property type="entry name" value="MI"/>
    <property type="match status" value="1"/>
</dbReference>
<accession>Q553R3</accession>